<gene>
    <name evidence="1" type="primary">accD</name>
    <name type="ordered locus">YPO2768</name>
    <name type="ordered locus">y1601</name>
    <name type="ordered locus">YP_2396</name>
</gene>
<organism>
    <name type="scientific">Yersinia pestis</name>
    <dbReference type="NCBI Taxonomy" id="632"/>
    <lineage>
        <taxon>Bacteria</taxon>
        <taxon>Pseudomonadati</taxon>
        <taxon>Pseudomonadota</taxon>
        <taxon>Gammaproteobacteria</taxon>
        <taxon>Enterobacterales</taxon>
        <taxon>Yersiniaceae</taxon>
        <taxon>Yersinia</taxon>
    </lineage>
</organism>
<feature type="chain" id="PRO_0000359104" description="Acetyl-coenzyme A carboxylase carboxyl transferase subunit beta">
    <location>
        <begin position="1"/>
        <end position="304"/>
    </location>
</feature>
<feature type="domain" description="CoA carboxyltransferase N-terminal" evidence="2">
    <location>
        <begin position="25"/>
        <end position="294"/>
    </location>
</feature>
<feature type="zinc finger region" description="C4-type" evidence="1">
    <location>
        <begin position="29"/>
        <end position="51"/>
    </location>
</feature>
<feature type="binding site" evidence="1">
    <location>
        <position position="29"/>
    </location>
    <ligand>
        <name>Zn(2+)</name>
        <dbReference type="ChEBI" id="CHEBI:29105"/>
    </ligand>
</feature>
<feature type="binding site" evidence="1">
    <location>
        <position position="32"/>
    </location>
    <ligand>
        <name>Zn(2+)</name>
        <dbReference type="ChEBI" id="CHEBI:29105"/>
    </ligand>
</feature>
<feature type="binding site" evidence="1">
    <location>
        <position position="48"/>
    </location>
    <ligand>
        <name>Zn(2+)</name>
        <dbReference type="ChEBI" id="CHEBI:29105"/>
    </ligand>
</feature>
<feature type="binding site" evidence="1">
    <location>
        <position position="51"/>
    </location>
    <ligand>
        <name>Zn(2+)</name>
        <dbReference type="ChEBI" id="CHEBI:29105"/>
    </ligand>
</feature>
<protein>
    <recommendedName>
        <fullName evidence="1">Acetyl-coenzyme A carboxylase carboxyl transferase subunit beta</fullName>
        <shortName evidence="1">ACCase subunit beta</shortName>
        <shortName evidence="1">Acetyl-CoA carboxylase carboxyltransferase subunit beta</shortName>
        <ecNumber evidence="1">2.1.3.15</ecNumber>
    </recommendedName>
</protein>
<comment type="function">
    <text evidence="1">Component of the acetyl coenzyme A carboxylase (ACC) complex. Biotin carboxylase (BC) catalyzes the carboxylation of biotin on its carrier protein (BCCP) and then the CO(2) group is transferred by the transcarboxylase to acetyl-CoA to form malonyl-CoA.</text>
</comment>
<comment type="catalytic activity">
    <reaction evidence="1">
        <text>N(6)-carboxybiotinyl-L-lysyl-[protein] + acetyl-CoA = N(6)-biotinyl-L-lysyl-[protein] + malonyl-CoA</text>
        <dbReference type="Rhea" id="RHEA:54728"/>
        <dbReference type="Rhea" id="RHEA-COMP:10505"/>
        <dbReference type="Rhea" id="RHEA-COMP:10506"/>
        <dbReference type="ChEBI" id="CHEBI:57288"/>
        <dbReference type="ChEBI" id="CHEBI:57384"/>
        <dbReference type="ChEBI" id="CHEBI:83144"/>
        <dbReference type="ChEBI" id="CHEBI:83145"/>
        <dbReference type="EC" id="2.1.3.15"/>
    </reaction>
</comment>
<comment type="cofactor">
    <cofactor evidence="1">
        <name>Zn(2+)</name>
        <dbReference type="ChEBI" id="CHEBI:29105"/>
    </cofactor>
    <text evidence="1">Binds 1 zinc ion per subunit.</text>
</comment>
<comment type="pathway">
    <text evidence="1">Lipid metabolism; malonyl-CoA biosynthesis; malonyl-CoA from acetyl-CoA: step 1/1.</text>
</comment>
<comment type="subunit">
    <text evidence="1">Acetyl-CoA carboxylase is a heterohexamer composed of biotin carboxyl carrier protein (AccB), biotin carboxylase (AccC) and two subunits each of ACCase subunit alpha (AccA) and ACCase subunit beta (AccD).</text>
</comment>
<comment type="subcellular location">
    <subcellularLocation>
        <location evidence="1">Cytoplasm</location>
    </subcellularLocation>
</comment>
<comment type="similarity">
    <text evidence="1">Belongs to the AccD/PCCB family.</text>
</comment>
<comment type="sequence caution" evidence="3">
    <conflict type="erroneous initiation">
        <sequence resource="EMBL-CDS" id="AAM85170"/>
    </conflict>
    <text>Extended N-terminus.</text>
</comment>
<comment type="sequence caution" evidence="3">
    <conflict type="erroneous initiation">
        <sequence resource="EMBL-CDS" id="AAS62601"/>
    </conflict>
    <text>Extended N-terminus.</text>
</comment>
<sequence length="304" mass="33274">MSWIERILNKSNITQTRKASIPEGVWTKCDSCGQVLYRAELERNLEVCPKCDHHMRMSARARLHMLLDAGSEVELGSELEPKDILKFRDSKKYKDRISAAQKDTGEKDALVAMKGTLQGMPIVAASFEFAFMGGSMASVVGARFVRAVEQALEDNCPLVCFSSSGGARMQEALMSLMQMAKTSAALAKMQERGLPYISVLTDPTMGGVSASLAMLGDINIAEPKALIGFAGPRVIEQTVREKLPPGFQRSEFLIEKGAIDMIVRRPVMRQTLASILSKLTHQPQPSVVESKADTVAQPENQADV</sequence>
<keyword id="KW-0067">ATP-binding</keyword>
<keyword id="KW-0963">Cytoplasm</keyword>
<keyword id="KW-0275">Fatty acid biosynthesis</keyword>
<keyword id="KW-0276">Fatty acid metabolism</keyword>
<keyword id="KW-0444">Lipid biosynthesis</keyword>
<keyword id="KW-0443">Lipid metabolism</keyword>
<keyword id="KW-0479">Metal-binding</keyword>
<keyword id="KW-0547">Nucleotide-binding</keyword>
<keyword id="KW-1185">Reference proteome</keyword>
<keyword id="KW-0808">Transferase</keyword>
<keyword id="KW-0862">Zinc</keyword>
<keyword id="KW-0863">Zinc-finger</keyword>
<accession>Q0WDC3</accession>
<accession>Q74T02</accession>
<accession>Q8D0U1</accession>
<proteinExistence type="inferred from homology"/>
<dbReference type="EC" id="2.1.3.15" evidence="1"/>
<dbReference type="EMBL" id="AL590842">
    <property type="protein sequence ID" value="CAL21387.1"/>
    <property type="molecule type" value="Genomic_DNA"/>
</dbReference>
<dbReference type="EMBL" id="AE009952">
    <property type="protein sequence ID" value="AAM85170.1"/>
    <property type="status" value="ALT_INIT"/>
    <property type="molecule type" value="Genomic_DNA"/>
</dbReference>
<dbReference type="EMBL" id="AE017042">
    <property type="protein sequence ID" value="AAS62601.1"/>
    <property type="status" value="ALT_INIT"/>
    <property type="molecule type" value="Genomic_DNA"/>
</dbReference>
<dbReference type="PIR" id="AH0337">
    <property type="entry name" value="AH0337"/>
</dbReference>
<dbReference type="RefSeq" id="WP_002209729.1">
    <property type="nucleotide sequence ID" value="NZ_WUCM01000012.1"/>
</dbReference>
<dbReference type="RefSeq" id="YP_002347715.1">
    <property type="nucleotide sequence ID" value="NC_003143.1"/>
</dbReference>
<dbReference type="SMR" id="Q0WDC3"/>
<dbReference type="STRING" id="214092.YPO2768"/>
<dbReference type="PaxDb" id="214092-YPO2768"/>
<dbReference type="EnsemblBacteria" id="AAS62601">
    <property type="protein sequence ID" value="AAS62601"/>
    <property type="gene ID" value="YP_2396"/>
</dbReference>
<dbReference type="GeneID" id="57975921"/>
<dbReference type="KEGG" id="ype:YPO2768"/>
<dbReference type="KEGG" id="ypk:y1601"/>
<dbReference type="KEGG" id="ypm:YP_2396"/>
<dbReference type="PATRIC" id="fig|214092.21.peg.3214"/>
<dbReference type="eggNOG" id="COG0777">
    <property type="taxonomic scope" value="Bacteria"/>
</dbReference>
<dbReference type="HOGENOM" id="CLU_015486_1_0_6"/>
<dbReference type="OMA" id="PEGLWIK"/>
<dbReference type="OrthoDB" id="9772975at2"/>
<dbReference type="UniPathway" id="UPA00655">
    <property type="reaction ID" value="UER00711"/>
</dbReference>
<dbReference type="Proteomes" id="UP000000815">
    <property type="component" value="Chromosome"/>
</dbReference>
<dbReference type="Proteomes" id="UP000001019">
    <property type="component" value="Chromosome"/>
</dbReference>
<dbReference type="Proteomes" id="UP000002490">
    <property type="component" value="Chromosome"/>
</dbReference>
<dbReference type="GO" id="GO:0009329">
    <property type="term" value="C:acetate CoA-transferase complex"/>
    <property type="evidence" value="ECO:0000318"/>
    <property type="project" value="GO_Central"/>
</dbReference>
<dbReference type="GO" id="GO:0003989">
    <property type="term" value="F:acetyl-CoA carboxylase activity"/>
    <property type="evidence" value="ECO:0007669"/>
    <property type="project" value="InterPro"/>
</dbReference>
<dbReference type="GO" id="GO:0005524">
    <property type="term" value="F:ATP binding"/>
    <property type="evidence" value="ECO:0007669"/>
    <property type="project" value="UniProtKB-KW"/>
</dbReference>
<dbReference type="GO" id="GO:0016743">
    <property type="term" value="F:carboxyl- or carbamoyltransferase activity"/>
    <property type="evidence" value="ECO:0007669"/>
    <property type="project" value="UniProtKB-UniRule"/>
</dbReference>
<dbReference type="GO" id="GO:0008270">
    <property type="term" value="F:zinc ion binding"/>
    <property type="evidence" value="ECO:0007669"/>
    <property type="project" value="UniProtKB-UniRule"/>
</dbReference>
<dbReference type="GO" id="GO:0006633">
    <property type="term" value="P:fatty acid biosynthetic process"/>
    <property type="evidence" value="ECO:0000318"/>
    <property type="project" value="GO_Central"/>
</dbReference>
<dbReference type="GO" id="GO:2001295">
    <property type="term" value="P:malonyl-CoA biosynthetic process"/>
    <property type="evidence" value="ECO:0000318"/>
    <property type="project" value="GO_Central"/>
</dbReference>
<dbReference type="GO" id="GO:0017148">
    <property type="term" value="P:negative regulation of translation"/>
    <property type="evidence" value="ECO:0000318"/>
    <property type="project" value="GO_Central"/>
</dbReference>
<dbReference type="FunFam" id="3.90.226.10:FF:000013">
    <property type="entry name" value="Acetyl-coenzyme A carboxylase carboxyl transferase subunit beta"/>
    <property type="match status" value="1"/>
</dbReference>
<dbReference type="Gene3D" id="3.90.226.10">
    <property type="entry name" value="2-enoyl-CoA Hydratase, Chain A, domain 1"/>
    <property type="match status" value="1"/>
</dbReference>
<dbReference type="HAMAP" id="MF_01395">
    <property type="entry name" value="AcetylCoA_CT_beta"/>
    <property type="match status" value="1"/>
</dbReference>
<dbReference type="InterPro" id="IPR034733">
    <property type="entry name" value="AcCoA_carboxyl_beta"/>
</dbReference>
<dbReference type="InterPro" id="IPR000438">
    <property type="entry name" value="Acetyl_CoA_COase_Trfase_b_su"/>
</dbReference>
<dbReference type="InterPro" id="IPR029045">
    <property type="entry name" value="ClpP/crotonase-like_dom_sf"/>
</dbReference>
<dbReference type="InterPro" id="IPR011762">
    <property type="entry name" value="COA_CT_N"/>
</dbReference>
<dbReference type="InterPro" id="IPR041010">
    <property type="entry name" value="Znf-ACC"/>
</dbReference>
<dbReference type="NCBIfam" id="TIGR00515">
    <property type="entry name" value="accD"/>
    <property type="match status" value="1"/>
</dbReference>
<dbReference type="PANTHER" id="PTHR42995">
    <property type="entry name" value="ACETYL-COENZYME A CARBOXYLASE CARBOXYL TRANSFERASE SUBUNIT BETA, CHLOROPLASTIC"/>
    <property type="match status" value="1"/>
</dbReference>
<dbReference type="PANTHER" id="PTHR42995:SF5">
    <property type="entry name" value="ACETYL-COENZYME A CARBOXYLASE CARBOXYL TRANSFERASE SUBUNIT BETA, CHLOROPLASTIC"/>
    <property type="match status" value="1"/>
</dbReference>
<dbReference type="Pfam" id="PF01039">
    <property type="entry name" value="Carboxyl_trans"/>
    <property type="match status" value="1"/>
</dbReference>
<dbReference type="Pfam" id="PF17848">
    <property type="entry name" value="Zn_ribbon_ACC"/>
    <property type="match status" value="1"/>
</dbReference>
<dbReference type="PRINTS" id="PR01070">
    <property type="entry name" value="ACCCTRFRASEB"/>
</dbReference>
<dbReference type="SUPFAM" id="SSF52096">
    <property type="entry name" value="ClpP/crotonase"/>
    <property type="match status" value="1"/>
</dbReference>
<dbReference type="PROSITE" id="PS50980">
    <property type="entry name" value="COA_CT_NTER"/>
    <property type="match status" value="1"/>
</dbReference>
<evidence type="ECO:0000255" key="1">
    <source>
        <dbReference type="HAMAP-Rule" id="MF_01395"/>
    </source>
</evidence>
<evidence type="ECO:0000255" key="2">
    <source>
        <dbReference type="PROSITE-ProRule" id="PRU01136"/>
    </source>
</evidence>
<evidence type="ECO:0000305" key="3"/>
<reference key="1">
    <citation type="journal article" date="2001" name="Nature">
        <title>Genome sequence of Yersinia pestis, the causative agent of plague.</title>
        <authorList>
            <person name="Parkhill J."/>
            <person name="Wren B.W."/>
            <person name="Thomson N.R."/>
            <person name="Titball R.W."/>
            <person name="Holden M.T.G."/>
            <person name="Prentice M.B."/>
            <person name="Sebaihia M."/>
            <person name="James K.D."/>
            <person name="Churcher C.M."/>
            <person name="Mungall K.L."/>
            <person name="Baker S."/>
            <person name="Basham D."/>
            <person name="Bentley S.D."/>
            <person name="Brooks K."/>
            <person name="Cerdeno-Tarraga A.-M."/>
            <person name="Chillingworth T."/>
            <person name="Cronin A."/>
            <person name="Davies R.M."/>
            <person name="Davis P."/>
            <person name="Dougan G."/>
            <person name="Feltwell T."/>
            <person name="Hamlin N."/>
            <person name="Holroyd S."/>
            <person name="Jagels K."/>
            <person name="Karlyshev A.V."/>
            <person name="Leather S."/>
            <person name="Moule S."/>
            <person name="Oyston P.C.F."/>
            <person name="Quail M.A."/>
            <person name="Rutherford K.M."/>
            <person name="Simmonds M."/>
            <person name="Skelton J."/>
            <person name="Stevens K."/>
            <person name="Whitehead S."/>
            <person name="Barrell B.G."/>
        </authorList>
    </citation>
    <scope>NUCLEOTIDE SEQUENCE [LARGE SCALE GENOMIC DNA]</scope>
    <source>
        <strain>CO-92 / Biovar Orientalis</strain>
    </source>
</reference>
<reference key="2">
    <citation type="journal article" date="2002" name="J. Bacteriol.">
        <title>Genome sequence of Yersinia pestis KIM.</title>
        <authorList>
            <person name="Deng W."/>
            <person name="Burland V."/>
            <person name="Plunkett G. III"/>
            <person name="Boutin A."/>
            <person name="Mayhew G.F."/>
            <person name="Liss P."/>
            <person name="Perna N.T."/>
            <person name="Rose D.J."/>
            <person name="Mau B."/>
            <person name="Zhou S."/>
            <person name="Schwartz D.C."/>
            <person name="Fetherston J.D."/>
            <person name="Lindler L.E."/>
            <person name="Brubaker R.R."/>
            <person name="Plano G.V."/>
            <person name="Straley S.C."/>
            <person name="McDonough K.A."/>
            <person name="Nilles M.L."/>
            <person name="Matson J.S."/>
            <person name="Blattner F.R."/>
            <person name="Perry R.D."/>
        </authorList>
    </citation>
    <scope>NUCLEOTIDE SEQUENCE [LARGE SCALE GENOMIC DNA]</scope>
    <source>
        <strain>KIM10+ / Biovar Mediaevalis</strain>
    </source>
</reference>
<reference key="3">
    <citation type="journal article" date="2004" name="DNA Res.">
        <title>Complete genome sequence of Yersinia pestis strain 91001, an isolate avirulent to humans.</title>
        <authorList>
            <person name="Song Y."/>
            <person name="Tong Z."/>
            <person name="Wang J."/>
            <person name="Wang L."/>
            <person name="Guo Z."/>
            <person name="Han Y."/>
            <person name="Zhang J."/>
            <person name="Pei D."/>
            <person name="Zhou D."/>
            <person name="Qin H."/>
            <person name="Pang X."/>
            <person name="Han Y."/>
            <person name="Zhai J."/>
            <person name="Li M."/>
            <person name="Cui B."/>
            <person name="Qi Z."/>
            <person name="Jin L."/>
            <person name="Dai R."/>
            <person name="Chen F."/>
            <person name="Li S."/>
            <person name="Ye C."/>
            <person name="Du Z."/>
            <person name="Lin W."/>
            <person name="Wang J."/>
            <person name="Yu J."/>
            <person name="Yang H."/>
            <person name="Wang J."/>
            <person name="Huang P."/>
            <person name="Yang R."/>
        </authorList>
    </citation>
    <scope>NUCLEOTIDE SEQUENCE [LARGE SCALE GENOMIC DNA]</scope>
    <source>
        <strain>91001 / Biovar Mediaevalis</strain>
    </source>
</reference>
<name>ACCD_YERPE</name>